<feature type="chain" id="PRO_1000051582" description="Glucose-1-phosphate adenylyltransferase">
    <location>
        <begin position="1"/>
        <end position="420"/>
    </location>
</feature>
<feature type="binding site" evidence="1">
    <location>
        <position position="107"/>
    </location>
    <ligand>
        <name>alpha-D-glucose 1-phosphate</name>
        <dbReference type="ChEBI" id="CHEBI:58601"/>
    </ligand>
</feature>
<feature type="binding site" evidence="1">
    <location>
        <position position="173"/>
    </location>
    <ligand>
        <name>alpha-D-glucose 1-phosphate</name>
        <dbReference type="ChEBI" id="CHEBI:58601"/>
    </ligand>
</feature>
<feature type="binding site" evidence="1">
    <location>
        <begin position="188"/>
        <end position="189"/>
    </location>
    <ligand>
        <name>alpha-D-glucose 1-phosphate</name>
        <dbReference type="ChEBI" id="CHEBI:58601"/>
    </ligand>
</feature>
<feature type="binding site" evidence="1">
    <location>
        <position position="206"/>
    </location>
    <ligand>
        <name>alpha-D-glucose 1-phosphate</name>
        <dbReference type="ChEBI" id="CHEBI:58601"/>
    </ligand>
</feature>
<gene>
    <name evidence="1" type="primary">glgC</name>
    <name type="ordered locus">Sbal_1334</name>
</gene>
<evidence type="ECO:0000255" key="1">
    <source>
        <dbReference type="HAMAP-Rule" id="MF_00624"/>
    </source>
</evidence>
<proteinExistence type="inferred from homology"/>
<organism>
    <name type="scientific">Shewanella baltica (strain OS155 / ATCC BAA-1091)</name>
    <dbReference type="NCBI Taxonomy" id="325240"/>
    <lineage>
        <taxon>Bacteria</taxon>
        <taxon>Pseudomonadati</taxon>
        <taxon>Pseudomonadota</taxon>
        <taxon>Gammaproteobacteria</taxon>
        <taxon>Alteromonadales</taxon>
        <taxon>Shewanellaceae</taxon>
        <taxon>Shewanella</taxon>
    </lineage>
</organism>
<keyword id="KW-0067">ATP-binding</keyword>
<keyword id="KW-0119">Carbohydrate metabolism</keyword>
<keyword id="KW-0320">Glycogen biosynthesis</keyword>
<keyword id="KW-0321">Glycogen metabolism</keyword>
<keyword id="KW-0547">Nucleotide-binding</keyword>
<keyword id="KW-0548">Nucleotidyltransferase</keyword>
<keyword id="KW-1185">Reference proteome</keyword>
<keyword id="KW-0808">Transferase</keyword>
<dbReference type="EC" id="2.7.7.27" evidence="1"/>
<dbReference type="EMBL" id="CP000563">
    <property type="protein sequence ID" value="ABN60852.1"/>
    <property type="molecule type" value="Genomic_DNA"/>
</dbReference>
<dbReference type="RefSeq" id="WP_011846265.1">
    <property type="nucleotide sequence ID" value="NC_009052.1"/>
</dbReference>
<dbReference type="SMR" id="A3D289"/>
<dbReference type="STRING" id="325240.Sbal_1334"/>
<dbReference type="KEGG" id="sbl:Sbal_1334"/>
<dbReference type="HOGENOM" id="CLU_029499_14_1_6"/>
<dbReference type="OrthoDB" id="9801810at2"/>
<dbReference type="UniPathway" id="UPA00164"/>
<dbReference type="Proteomes" id="UP000001557">
    <property type="component" value="Chromosome"/>
</dbReference>
<dbReference type="GO" id="GO:0005524">
    <property type="term" value="F:ATP binding"/>
    <property type="evidence" value="ECO:0007669"/>
    <property type="project" value="UniProtKB-KW"/>
</dbReference>
<dbReference type="GO" id="GO:0008878">
    <property type="term" value="F:glucose-1-phosphate adenylyltransferase activity"/>
    <property type="evidence" value="ECO:0007669"/>
    <property type="project" value="UniProtKB-UniRule"/>
</dbReference>
<dbReference type="GO" id="GO:0005978">
    <property type="term" value="P:glycogen biosynthetic process"/>
    <property type="evidence" value="ECO:0007669"/>
    <property type="project" value="UniProtKB-UniRule"/>
</dbReference>
<dbReference type="CDD" id="cd02508">
    <property type="entry name" value="ADP_Glucose_PP"/>
    <property type="match status" value="1"/>
</dbReference>
<dbReference type="CDD" id="cd04651">
    <property type="entry name" value="LbH_G1P_AT_C"/>
    <property type="match status" value="1"/>
</dbReference>
<dbReference type="Gene3D" id="2.160.10.10">
    <property type="entry name" value="Hexapeptide repeat proteins"/>
    <property type="match status" value="1"/>
</dbReference>
<dbReference type="Gene3D" id="3.90.550.10">
    <property type="entry name" value="Spore Coat Polysaccharide Biosynthesis Protein SpsA, Chain A"/>
    <property type="match status" value="1"/>
</dbReference>
<dbReference type="HAMAP" id="MF_00624">
    <property type="entry name" value="GlgC"/>
    <property type="match status" value="1"/>
</dbReference>
<dbReference type="InterPro" id="IPR011831">
    <property type="entry name" value="ADP-Glc_PPase"/>
</dbReference>
<dbReference type="InterPro" id="IPR005836">
    <property type="entry name" value="ADP_Glu_pyroP_CS"/>
</dbReference>
<dbReference type="InterPro" id="IPR023049">
    <property type="entry name" value="GlgC_bac"/>
</dbReference>
<dbReference type="InterPro" id="IPR056818">
    <property type="entry name" value="GlmU/GlgC-like_hexapep"/>
</dbReference>
<dbReference type="InterPro" id="IPR005835">
    <property type="entry name" value="NTP_transferase_dom"/>
</dbReference>
<dbReference type="InterPro" id="IPR029044">
    <property type="entry name" value="Nucleotide-diphossugar_trans"/>
</dbReference>
<dbReference type="InterPro" id="IPR011004">
    <property type="entry name" value="Trimer_LpxA-like_sf"/>
</dbReference>
<dbReference type="NCBIfam" id="TIGR02091">
    <property type="entry name" value="glgC"/>
    <property type="match status" value="1"/>
</dbReference>
<dbReference type="NCBIfam" id="NF001947">
    <property type="entry name" value="PRK00725.1"/>
    <property type="match status" value="1"/>
</dbReference>
<dbReference type="NCBIfam" id="NF002023">
    <property type="entry name" value="PRK00844.1"/>
    <property type="match status" value="1"/>
</dbReference>
<dbReference type="PANTHER" id="PTHR43523:SF2">
    <property type="entry name" value="GLUCOSE-1-PHOSPHATE ADENYLYLTRANSFERASE"/>
    <property type="match status" value="1"/>
</dbReference>
<dbReference type="PANTHER" id="PTHR43523">
    <property type="entry name" value="GLUCOSE-1-PHOSPHATE ADENYLYLTRANSFERASE-RELATED"/>
    <property type="match status" value="1"/>
</dbReference>
<dbReference type="Pfam" id="PF24894">
    <property type="entry name" value="Hexapep_GlmU"/>
    <property type="match status" value="1"/>
</dbReference>
<dbReference type="Pfam" id="PF00483">
    <property type="entry name" value="NTP_transferase"/>
    <property type="match status" value="1"/>
</dbReference>
<dbReference type="SUPFAM" id="SSF53448">
    <property type="entry name" value="Nucleotide-diphospho-sugar transferases"/>
    <property type="match status" value="1"/>
</dbReference>
<dbReference type="SUPFAM" id="SSF51161">
    <property type="entry name" value="Trimeric LpxA-like enzymes"/>
    <property type="match status" value="1"/>
</dbReference>
<dbReference type="PROSITE" id="PS00808">
    <property type="entry name" value="ADP_GLC_PYROPHOSPH_1"/>
    <property type="match status" value="1"/>
</dbReference>
<dbReference type="PROSITE" id="PS00809">
    <property type="entry name" value="ADP_GLC_PYROPHOSPH_2"/>
    <property type="match status" value="1"/>
</dbReference>
<name>GLGC_SHEB5</name>
<reference key="1">
    <citation type="submission" date="2007-02" db="EMBL/GenBank/DDBJ databases">
        <title>Complete sequence of chromosome of Shewanella baltica OS155.</title>
        <authorList>
            <consortium name="US DOE Joint Genome Institute"/>
            <person name="Copeland A."/>
            <person name="Lucas S."/>
            <person name="Lapidus A."/>
            <person name="Barry K."/>
            <person name="Detter J.C."/>
            <person name="Glavina del Rio T."/>
            <person name="Hammon N."/>
            <person name="Israni S."/>
            <person name="Dalin E."/>
            <person name="Tice H."/>
            <person name="Pitluck S."/>
            <person name="Sims D.R."/>
            <person name="Brettin T."/>
            <person name="Bruce D."/>
            <person name="Han C."/>
            <person name="Tapia R."/>
            <person name="Brainard J."/>
            <person name="Schmutz J."/>
            <person name="Larimer F."/>
            <person name="Land M."/>
            <person name="Hauser L."/>
            <person name="Kyrpides N."/>
            <person name="Mikhailova N."/>
            <person name="Brettar I."/>
            <person name="Klappenbach J."/>
            <person name="Konstantinidis K."/>
            <person name="Rodrigues J."/>
            <person name="Tiedje J."/>
            <person name="Richardson P."/>
        </authorList>
    </citation>
    <scope>NUCLEOTIDE SEQUENCE [LARGE SCALE GENOMIC DNA]</scope>
    <source>
        <strain>OS155 / ATCC BAA-1091</strain>
    </source>
</reference>
<comment type="function">
    <text evidence="1">Involved in the biosynthesis of ADP-glucose, a building block required for the elongation reactions to produce glycogen. Catalyzes the reaction between ATP and alpha-D-glucose 1-phosphate (G1P) to produce pyrophosphate and ADP-Glc.</text>
</comment>
<comment type="catalytic activity">
    <reaction evidence="1">
        <text>alpha-D-glucose 1-phosphate + ATP + H(+) = ADP-alpha-D-glucose + diphosphate</text>
        <dbReference type="Rhea" id="RHEA:12120"/>
        <dbReference type="ChEBI" id="CHEBI:15378"/>
        <dbReference type="ChEBI" id="CHEBI:30616"/>
        <dbReference type="ChEBI" id="CHEBI:33019"/>
        <dbReference type="ChEBI" id="CHEBI:57498"/>
        <dbReference type="ChEBI" id="CHEBI:58601"/>
        <dbReference type="EC" id="2.7.7.27"/>
    </reaction>
</comment>
<comment type="pathway">
    <text evidence="1">Glycan biosynthesis; glycogen biosynthesis.</text>
</comment>
<comment type="subunit">
    <text evidence="1">Homotetramer.</text>
</comment>
<comment type="similarity">
    <text evidence="1">Belongs to the bacterial/plant glucose-1-phosphate adenylyltransferase family.</text>
</comment>
<sequence>MSNVRYTSNLTRETYALILAGGRGSRLHELTDWRAKPALYFGGKFRIIDFPLSNCINSGIRRVGVVTQYKSHSLIRHVMRGWGHFKKELGESVEILPASQRYSENWYQGTADAVFQNIDIIRHELPKYVMVLSGDHVYRMDYAGLLAAHAESGADMTVSCLEVPIAEAAGSFGVMEVDEEMRILGFEEKPQQPKHSPGNPEMCLASMGNYLFNTEFLFDQLKKDALNESSDRDFGKDIIPAIIEKHNVFAYPFKSAFPNEQAYWRDVGTLDSFWQANMELLSPTPALNLYDAKWPIWTFQEQLPPAKFVFDDDDRRGMALDSIVSGGCIISGATVRRSVLFNEVRVCSYSLVEDSVVLPDVVVLRHCKIKNAILDRGCIIPEGMVIGYNHDHDRAKGFRVSEKGVTLVTRDMLGLPVGYE</sequence>
<accession>A3D289</accession>
<protein>
    <recommendedName>
        <fullName evidence="1">Glucose-1-phosphate adenylyltransferase</fullName>
        <ecNumber evidence="1">2.7.7.27</ecNumber>
    </recommendedName>
    <alternativeName>
        <fullName evidence="1">ADP-glucose pyrophosphorylase</fullName>
        <shortName evidence="1">ADPGlc PPase</shortName>
    </alternativeName>
    <alternativeName>
        <fullName evidence="1">ADP-glucose synthase</fullName>
    </alternativeName>
</protein>